<comment type="function">
    <text evidence="2">Essential component of the nuclear pore complex (NPC) that seems to be required for NPC assembly and maintenance. As part of the NPC Nup107-160 subcomplex plays a role in RNA export and in tethering NUP96/Nup98 and NUP153 to the nucleus. The Nup107-160 complex seems to be required for spindle assembly during mitosis. NUP85 is required for membrane clustering of CCL2-activated CCR2. Seems to be involved in CCR2-mediated chemotaxis of monocytes and may link activated CCR2 to the phosphatidyl-inositol 3-kinase-Rac-lammellipodium protrusion cascade. Involved in nephrogenesis.</text>
</comment>
<comment type="subunit">
    <text evidence="2">Component of the nuclear pore complex (NPC). Component of the NPC Nup107-160 subcomplex, consisting of at least NUP107, NUP98/Nup96, NUP160, NUP133, NUP85, NUP37, NUP43 and SEC13. Interacts with NUP160, NUP133 and SEC13. Interacts with NUP37, NUP107 and NUP43. Interacts with CCR2.</text>
</comment>
<comment type="subcellular location">
    <subcellularLocation>
        <location evidence="2">Nucleus</location>
        <location evidence="2">Nuclear pore complex</location>
    </subcellularLocation>
    <subcellularLocation>
        <location evidence="2">Chromosome</location>
        <location evidence="2">Centromere</location>
        <location evidence="2">Kinetochore</location>
    </subcellularLocation>
    <subcellularLocation>
        <location evidence="2">Cytoplasm</location>
        <location evidence="2">Cytoskeleton</location>
        <location evidence="2">Spindle</location>
    </subcellularLocation>
    <subcellularLocation>
        <location evidence="2">Cytoplasm</location>
    </subcellularLocation>
    <subcellularLocation>
        <location evidence="2">Nucleus membrane</location>
    </subcellularLocation>
    <text evidence="2">During mitosis, localizes to the kinetochores and spindle poles. Upon CCl2 stimulation translocates from the cytoplasm to the membrane and colocalizes with CCR2 at the front of migrating cells.</text>
</comment>
<comment type="similarity">
    <text evidence="3">Belongs to the nucleoporin Nup85 family.</text>
</comment>
<feature type="chain" id="PRO_0000324186" description="Nuclear pore complex protein Nup85">
    <location>
        <begin position="1"/>
        <end position="656"/>
    </location>
</feature>
<feature type="modified residue" description="N-acetylmethionine" evidence="2">
    <location>
        <position position="1"/>
    </location>
</feature>
<feature type="modified residue" description="N6-acetyllysine" evidence="1">
    <location>
        <position position="92"/>
    </location>
</feature>
<feature type="sequence conflict" description="In Ref. 1; ABS45060." evidence="3" ref="1">
    <original>F</original>
    <variation>L</variation>
    <location>
        <position position="353"/>
    </location>
</feature>
<protein>
    <recommendedName>
        <fullName>Nuclear pore complex protein Nup85</fullName>
    </recommendedName>
    <alternativeName>
        <fullName>85 kDa nucleoporin</fullName>
    </alternativeName>
    <alternativeName>
        <fullName>Nucleoporin Nup85</fullName>
    </alternativeName>
</protein>
<evidence type="ECO:0000250" key="1">
    <source>
        <dbReference type="UniProtKB" id="Q8R480"/>
    </source>
</evidence>
<evidence type="ECO:0000250" key="2">
    <source>
        <dbReference type="UniProtKB" id="Q9BW27"/>
    </source>
</evidence>
<evidence type="ECO:0000305" key="3"/>
<reference key="1">
    <citation type="journal article" date="2005" name="BMC Genomics">
        <title>Characterization of 954 bovine full-CDS cDNA sequences.</title>
        <authorList>
            <person name="Harhay G.P."/>
            <person name="Sonstegard T.S."/>
            <person name="Keele J.W."/>
            <person name="Heaton M.P."/>
            <person name="Clawson M.L."/>
            <person name="Snelling W.M."/>
            <person name="Wiedmann R.T."/>
            <person name="Van Tassell C.P."/>
            <person name="Smith T.P.L."/>
        </authorList>
    </citation>
    <scope>NUCLEOTIDE SEQUENCE [LARGE SCALE MRNA]</scope>
</reference>
<reference key="2">
    <citation type="submission" date="2005-08" db="EMBL/GenBank/DDBJ databases">
        <authorList>
            <consortium name="NIH - Mammalian Gene Collection (MGC) project"/>
        </authorList>
    </citation>
    <scope>NUCLEOTIDE SEQUENCE [LARGE SCALE MRNA]</scope>
    <source>
        <strain>Crossbred X Angus</strain>
        <tissue>Ileum</tissue>
    </source>
</reference>
<proteinExistence type="evidence at transcript level"/>
<organism>
    <name type="scientific">Bos taurus</name>
    <name type="common">Bovine</name>
    <dbReference type="NCBI Taxonomy" id="9913"/>
    <lineage>
        <taxon>Eukaryota</taxon>
        <taxon>Metazoa</taxon>
        <taxon>Chordata</taxon>
        <taxon>Craniata</taxon>
        <taxon>Vertebrata</taxon>
        <taxon>Euteleostomi</taxon>
        <taxon>Mammalia</taxon>
        <taxon>Eutheria</taxon>
        <taxon>Laurasiatheria</taxon>
        <taxon>Artiodactyla</taxon>
        <taxon>Ruminantia</taxon>
        <taxon>Pecora</taxon>
        <taxon>Bovidae</taxon>
        <taxon>Bovinae</taxon>
        <taxon>Bos</taxon>
    </lineage>
</organism>
<dbReference type="EMBL" id="BT030744">
    <property type="protein sequence ID" value="ABS45060.1"/>
    <property type="molecule type" value="mRNA"/>
</dbReference>
<dbReference type="EMBL" id="BC102703">
    <property type="protein sequence ID" value="AAI02704.1"/>
    <property type="molecule type" value="mRNA"/>
</dbReference>
<dbReference type="RefSeq" id="NP_001029559.1">
    <property type="nucleotide sequence ID" value="NM_001034387.1"/>
</dbReference>
<dbReference type="SMR" id="Q3ZC98"/>
<dbReference type="FunCoup" id="Q3ZC98">
    <property type="interactions" value="5204"/>
</dbReference>
<dbReference type="STRING" id="9913.ENSBTAP00000034574"/>
<dbReference type="PaxDb" id="9913-ENSBTAP00000034574"/>
<dbReference type="Ensembl" id="ENSBTAT00000034688.6">
    <property type="protein sequence ID" value="ENSBTAP00000034574.4"/>
    <property type="gene ID" value="ENSBTAG00000016126.7"/>
</dbReference>
<dbReference type="GeneID" id="510540"/>
<dbReference type="KEGG" id="bta:510540"/>
<dbReference type="CTD" id="79902"/>
<dbReference type="VEuPathDB" id="HostDB:ENSBTAG00000016126"/>
<dbReference type="VGNC" id="VGNC:32364">
    <property type="gene designation" value="NUP85"/>
</dbReference>
<dbReference type="eggNOG" id="KOG2271">
    <property type="taxonomic scope" value="Eukaryota"/>
</dbReference>
<dbReference type="GeneTree" id="ENSGT00390000000204"/>
<dbReference type="HOGENOM" id="CLU_027342_0_0_1"/>
<dbReference type="InParanoid" id="Q3ZC98"/>
<dbReference type="OMA" id="ELMEWLN"/>
<dbReference type="OrthoDB" id="17644at2759"/>
<dbReference type="TreeFam" id="TF323240"/>
<dbReference type="Reactome" id="R-BTA-141444">
    <property type="pathway name" value="Amplification of signal from unattached kinetochores via a MAD2 inhibitory signal"/>
</dbReference>
<dbReference type="Reactome" id="R-BTA-159227">
    <property type="pathway name" value="Transport of the SLBP independent Mature mRNA"/>
</dbReference>
<dbReference type="Reactome" id="R-BTA-159230">
    <property type="pathway name" value="Transport of the SLBP Dependant Mature mRNA"/>
</dbReference>
<dbReference type="Reactome" id="R-BTA-159231">
    <property type="pathway name" value="Transport of Mature mRNA Derived from an Intronless Transcript"/>
</dbReference>
<dbReference type="Reactome" id="R-BTA-159236">
    <property type="pathway name" value="Transport of Mature mRNA derived from an Intron-Containing Transcript"/>
</dbReference>
<dbReference type="Reactome" id="R-BTA-191859">
    <property type="pathway name" value="snRNP Assembly"/>
</dbReference>
<dbReference type="Reactome" id="R-BTA-2467813">
    <property type="pathway name" value="Separation of Sister Chromatids"/>
</dbReference>
<dbReference type="Reactome" id="R-BTA-2500257">
    <property type="pathway name" value="Resolution of Sister Chromatid Cohesion"/>
</dbReference>
<dbReference type="Reactome" id="R-BTA-3108214">
    <property type="pathway name" value="SUMOylation of DNA damage response and repair proteins"/>
</dbReference>
<dbReference type="Reactome" id="R-BTA-3232142">
    <property type="pathway name" value="SUMOylation of ubiquitinylation proteins"/>
</dbReference>
<dbReference type="Reactome" id="R-BTA-3301854">
    <property type="pathway name" value="Nuclear Pore Complex (NPC) Disassembly"/>
</dbReference>
<dbReference type="Reactome" id="R-BTA-3371453">
    <property type="pathway name" value="Regulation of HSF1-mediated heat shock response"/>
</dbReference>
<dbReference type="Reactome" id="R-BTA-4085377">
    <property type="pathway name" value="SUMOylation of SUMOylation proteins"/>
</dbReference>
<dbReference type="Reactome" id="R-BTA-4551638">
    <property type="pathway name" value="SUMOylation of chromatin organization proteins"/>
</dbReference>
<dbReference type="Reactome" id="R-BTA-4570464">
    <property type="pathway name" value="SUMOylation of RNA binding proteins"/>
</dbReference>
<dbReference type="Reactome" id="R-BTA-4615885">
    <property type="pathway name" value="SUMOylation of DNA replication proteins"/>
</dbReference>
<dbReference type="Reactome" id="R-BTA-5578749">
    <property type="pathway name" value="Transcriptional regulation by small RNAs"/>
</dbReference>
<dbReference type="Reactome" id="R-BTA-5663220">
    <property type="pathway name" value="RHO GTPases Activate Formins"/>
</dbReference>
<dbReference type="Reactome" id="R-BTA-68877">
    <property type="pathway name" value="Mitotic Prometaphase"/>
</dbReference>
<dbReference type="Reactome" id="R-BTA-9615933">
    <property type="pathway name" value="Postmitotic nuclear pore complex (NPC) reformation"/>
</dbReference>
<dbReference type="Reactome" id="R-BTA-9648025">
    <property type="pathway name" value="EML4 and NUDC in mitotic spindle formation"/>
</dbReference>
<dbReference type="Proteomes" id="UP000009136">
    <property type="component" value="Chromosome 19"/>
</dbReference>
<dbReference type="Bgee" id="ENSBTAG00000016126">
    <property type="expression patterns" value="Expressed in granulosa cell and 108 other cell types or tissues"/>
</dbReference>
<dbReference type="GO" id="GO:0005737">
    <property type="term" value="C:cytoplasm"/>
    <property type="evidence" value="ECO:0007669"/>
    <property type="project" value="UniProtKB-SubCell"/>
</dbReference>
<dbReference type="GO" id="GO:0000776">
    <property type="term" value="C:kinetochore"/>
    <property type="evidence" value="ECO:0007669"/>
    <property type="project" value="UniProtKB-KW"/>
</dbReference>
<dbReference type="GO" id="GO:0031965">
    <property type="term" value="C:nuclear membrane"/>
    <property type="evidence" value="ECO:0007669"/>
    <property type="project" value="UniProtKB-SubCell"/>
</dbReference>
<dbReference type="GO" id="GO:0031080">
    <property type="term" value="C:nuclear pore outer ring"/>
    <property type="evidence" value="ECO:0000318"/>
    <property type="project" value="GO_Central"/>
</dbReference>
<dbReference type="GO" id="GO:0005819">
    <property type="term" value="C:spindle"/>
    <property type="evidence" value="ECO:0007669"/>
    <property type="project" value="UniProtKB-SubCell"/>
</dbReference>
<dbReference type="GO" id="GO:0017056">
    <property type="term" value="F:structural constituent of nuclear pore"/>
    <property type="evidence" value="ECO:0000318"/>
    <property type="project" value="GO_Central"/>
</dbReference>
<dbReference type="GO" id="GO:0006406">
    <property type="term" value="P:mRNA export from nucleus"/>
    <property type="evidence" value="ECO:0000318"/>
    <property type="project" value="GO_Central"/>
</dbReference>
<dbReference type="GO" id="GO:0072006">
    <property type="term" value="P:nephron development"/>
    <property type="evidence" value="ECO:0000250"/>
    <property type="project" value="UniProtKB"/>
</dbReference>
<dbReference type="GO" id="GO:0045893">
    <property type="term" value="P:positive regulation of DNA-templated transcription"/>
    <property type="evidence" value="ECO:0000318"/>
    <property type="project" value="GO_Central"/>
</dbReference>
<dbReference type="GO" id="GO:0006606">
    <property type="term" value="P:protein import into nucleus"/>
    <property type="evidence" value="ECO:0000318"/>
    <property type="project" value="GO_Central"/>
</dbReference>
<dbReference type="InterPro" id="IPR011502">
    <property type="entry name" value="Nucleoporin_Nup85"/>
</dbReference>
<dbReference type="PANTHER" id="PTHR13373">
    <property type="entry name" value="FROUNT PROTEIN-RELATED"/>
    <property type="match status" value="1"/>
</dbReference>
<dbReference type="PANTHER" id="PTHR13373:SF21">
    <property type="entry name" value="NUCLEAR PORE COMPLEX PROTEIN NUP85"/>
    <property type="match status" value="1"/>
</dbReference>
<dbReference type="Pfam" id="PF07575">
    <property type="entry name" value="Nucleopor_Nup85"/>
    <property type="match status" value="1"/>
</dbReference>
<keyword id="KW-0007">Acetylation</keyword>
<keyword id="KW-0137">Centromere</keyword>
<keyword id="KW-0158">Chromosome</keyword>
<keyword id="KW-0963">Cytoplasm</keyword>
<keyword id="KW-0206">Cytoskeleton</keyword>
<keyword id="KW-0995">Kinetochore</keyword>
<keyword id="KW-0472">Membrane</keyword>
<keyword id="KW-0509">mRNA transport</keyword>
<keyword id="KW-0906">Nuclear pore complex</keyword>
<keyword id="KW-0539">Nucleus</keyword>
<keyword id="KW-0653">Protein transport</keyword>
<keyword id="KW-1185">Reference proteome</keyword>
<keyword id="KW-0811">Translocation</keyword>
<keyword id="KW-0813">Transport</keyword>
<name>NUP85_BOVIN</name>
<accession>Q3ZC98</accession>
<accession>A7E3X3</accession>
<gene>
    <name type="primary">NUP85</name>
</gene>
<sequence>MEEFDGEPTVTWIPGVNSQKKQMCFDWGPGEMLVCETSFNKKEKSEMVAGCPFIHIIRKDIDVYSKILRKLFNESHGIFVGLQRIEEELTGKSRKAQLVRVSKNYRSVIRACMEEMHQFAVADKDSAIGRQFSSQVSILSAVELIWNLCEILFIEVAPAGPLLLYLLDWVRLHVCEVDSLSADVLGSENPSKHESFWNLVTTLVLQGRLDEARQMLSKEADSNPTSAGMCRVLGDLMRTMPILSPGNTQTLTELELRWQHWHEECERHLQDGTFASNPHLESLCKVLLGDDAALLEHKELLSNWYHFLVTRLLYSQPTVKPMDLHLYAQSSLDLFLGGESSPEPLDNILMAAFEFDIHQVIKECSIALSNWWFVAHLTDLLDHCKLLQSHNLYFGSNMREFLLLEYASGLFAHHSLWQLGVDYCDHCPELGRVSLELHIERIPLTTEQKALKVLRVCEQRQMTEQVRSICKVLAMKAVRNNRLGSALSWSIRAKDAAFATLVSDRFLRDYCERGCFSDLDLIDNLGPAMMLSDRLTFLGKYREFHRLYGEKCFVDAASLLLSLMTSQIAPRSFWMTLLTDALPLLEQKQVIFSAEQTYELLRCLEDLTSGRPLCGEPDAQQLQDDDIETTKVEILRLALARNLARSIIKEGSLEGS</sequence>